<sequence length="257" mass="28076">MLLAIDCGNTNTVFSIWDGTQFLATWRIATDHKRTADEYHVWLSTLLSLTKIEARISEAVISSTVPRVVFNLRVLCNRYYDCRPLVVGKPECRLPVAPRVDQGTTVGPDRLVNTVAGFHLHGGNLIVVDFGTATTFDVVDADGAYIGGVIAPGVNLSLEALHMAAAALPHVDVTKPQQAIGTNTVACIQSGVYWGYIGLVEGIVRQIRLERDSPMKVIATGGLAPLFDQGFNLFDRVEDDLTMQGLVLIHQYNKDLE</sequence>
<gene>
    <name evidence="1" type="primary">coaX</name>
    <name type="ordered locus">Rsph17029_1193</name>
</gene>
<comment type="function">
    <text evidence="1">Catalyzes the phosphorylation of pantothenate (Pan), the first step in CoA biosynthesis.</text>
</comment>
<comment type="catalytic activity">
    <reaction evidence="1">
        <text>(R)-pantothenate + ATP = (R)-4'-phosphopantothenate + ADP + H(+)</text>
        <dbReference type="Rhea" id="RHEA:16373"/>
        <dbReference type="ChEBI" id="CHEBI:10986"/>
        <dbReference type="ChEBI" id="CHEBI:15378"/>
        <dbReference type="ChEBI" id="CHEBI:29032"/>
        <dbReference type="ChEBI" id="CHEBI:30616"/>
        <dbReference type="ChEBI" id="CHEBI:456216"/>
        <dbReference type="EC" id="2.7.1.33"/>
    </reaction>
</comment>
<comment type="cofactor">
    <cofactor evidence="1">
        <name>NH4(+)</name>
        <dbReference type="ChEBI" id="CHEBI:28938"/>
    </cofactor>
    <cofactor evidence="1">
        <name>K(+)</name>
        <dbReference type="ChEBI" id="CHEBI:29103"/>
    </cofactor>
    <text evidence="1">A monovalent cation. Ammonium or potassium.</text>
</comment>
<comment type="pathway">
    <text evidence="1">Cofactor biosynthesis; coenzyme A biosynthesis; CoA from (R)-pantothenate: step 1/5.</text>
</comment>
<comment type="subunit">
    <text evidence="1">Homodimer.</text>
</comment>
<comment type="subcellular location">
    <subcellularLocation>
        <location evidence="1">Cytoplasm</location>
    </subcellularLocation>
</comment>
<comment type="similarity">
    <text evidence="1">Belongs to the type III pantothenate kinase family.</text>
</comment>
<reference key="1">
    <citation type="submission" date="2007-02" db="EMBL/GenBank/DDBJ databases">
        <title>Complete sequence of chromosome 1 of Rhodobacter sphaeroides ATCC 17029.</title>
        <authorList>
            <person name="Copeland A."/>
            <person name="Lucas S."/>
            <person name="Lapidus A."/>
            <person name="Barry K."/>
            <person name="Detter J.C."/>
            <person name="Glavina del Rio T."/>
            <person name="Hammon N."/>
            <person name="Israni S."/>
            <person name="Dalin E."/>
            <person name="Tice H."/>
            <person name="Pitluck S."/>
            <person name="Kiss H."/>
            <person name="Brettin T."/>
            <person name="Bruce D."/>
            <person name="Han C."/>
            <person name="Tapia R."/>
            <person name="Gilna P."/>
            <person name="Schmutz J."/>
            <person name="Larimer F."/>
            <person name="Land M."/>
            <person name="Hauser L."/>
            <person name="Kyrpides N."/>
            <person name="Mikhailova N."/>
            <person name="Richardson P."/>
            <person name="Mackenzie C."/>
            <person name="Choudhary M."/>
            <person name="Donohue T.J."/>
            <person name="Kaplan S."/>
        </authorList>
    </citation>
    <scope>NUCLEOTIDE SEQUENCE [LARGE SCALE GENOMIC DNA]</scope>
    <source>
        <strain>ATCC 17029 / ATH 2.4.9</strain>
    </source>
</reference>
<evidence type="ECO:0000255" key="1">
    <source>
        <dbReference type="HAMAP-Rule" id="MF_01274"/>
    </source>
</evidence>
<name>COAX_CERS1</name>
<dbReference type="EC" id="2.7.1.33" evidence="1"/>
<dbReference type="EMBL" id="CP000577">
    <property type="protein sequence ID" value="ABN76303.1"/>
    <property type="molecule type" value="Genomic_DNA"/>
</dbReference>
<dbReference type="RefSeq" id="WP_009564427.1">
    <property type="nucleotide sequence ID" value="NC_009049.1"/>
</dbReference>
<dbReference type="SMR" id="A3PIY7"/>
<dbReference type="KEGG" id="rsh:Rsph17029_1193"/>
<dbReference type="HOGENOM" id="CLU_066627_1_0_5"/>
<dbReference type="UniPathway" id="UPA00241">
    <property type="reaction ID" value="UER00352"/>
</dbReference>
<dbReference type="GO" id="GO:0005737">
    <property type="term" value="C:cytoplasm"/>
    <property type="evidence" value="ECO:0007669"/>
    <property type="project" value="UniProtKB-SubCell"/>
</dbReference>
<dbReference type="GO" id="GO:0005524">
    <property type="term" value="F:ATP binding"/>
    <property type="evidence" value="ECO:0007669"/>
    <property type="project" value="UniProtKB-UniRule"/>
</dbReference>
<dbReference type="GO" id="GO:0046872">
    <property type="term" value="F:metal ion binding"/>
    <property type="evidence" value="ECO:0007669"/>
    <property type="project" value="UniProtKB-KW"/>
</dbReference>
<dbReference type="GO" id="GO:0004594">
    <property type="term" value="F:pantothenate kinase activity"/>
    <property type="evidence" value="ECO:0007669"/>
    <property type="project" value="UniProtKB-UniRule"/>
</dbReference>
<dbReference type="GO" id="GO:0015937">
    <property type="term" value="P:coenzyme A biosynthetic process"/>
    <property type="evidence" value="ECO:0007669"/>
    <property type="project" value="UniProtKB-UniRule"/>
</dbReference>
<dbReference type="CDD" id="cd24015">
    <property type="entry name" value="ASKHA_NBD_PanK-III"/>
    <property type="match status" value="1"/>
</dbReference>
<dbReference type="Gene3D" id="3.30.420.40">
    <property type="match status" value="2"/>
</dbReference>
<dbReference type="HAMAP" id="MF_01274">
    <property type="entry name" value="Pantothen_kinase_3"/>
    <property type="match status" value="1"/>
</dbReference>
<dbReference type="InterPro" id="IPR043129">
    <property type="entry name" value="ATPase_NBD"/>
</dbReference>
<dbReference type="InterPro" id="IPR004619">
    <property type="entry name" value="Type_III_PanK"/>
</dbReference>
<dbReference type="NCBIfam" id="TIGR00671">
    <property type="entry name" value="baf"/>
    <property type="match status" value="1"/>
</dbReference>
<dbReference type="NCBIfam" id="NF009844">
    <property type="entry name" value="PRK13318.1-2"/>
    <property type="match status" value="1"/>
</dbReference>
<dbReference type="NCBIfam" id="NF009848">
    <property type="entry name" value="PRK13318.1-6"/>
    <property type="match status" value="1"/>
</dbReference>
<dbReference type="NCBIfam" id="NF009855">
    <property type="entry name" value="PRK13321.1"/>
    <property type="match status" value="1"/>
</dbReference>
<dbReference type="PANTHER" id="PTHR34265">
    <property type="entry name" value="TYPE III PANTOTHENATE KINASE"/>
    <property type="match status" value="1"/>
</dbReference>
<dbReference type="PANTHER" id="PTHR34265:SF1">
    <property type="entry name" value="TYPE III PANTOTHENATE KINASE"/>
    <property type="match status" value="1"/>
</dbReference>
<dbReference type="Pfam" id="PF03309">
    <property type="entry name" value="Pan_kinase"/>
    <property type="match status" value="1"/>
</dbReference>
<dbReference type="SUPFAM" id="SSF53067">
    <property type="entry name" value="Actin-like ATPase domain"/>
    <property type="match status" value="2"/>
</dbReference>
<keyword id="KW-0067">ATP-binding</keyword>
<keyword id="KW-0173">Coenzyme A biosynthesis</keyword>
<keyword id="KW-0963">Cytoplasm</keyword>
<keyword id="KW-0418">Kinase</keyword>
<keyword id="KW-0479">Metal-binding</keyword>
<keyword id="KW-0547">Nucleotide-binding</keyword>
<keyword id="KW-0630">Potassium</keyword>
<keyword id="KW-0808">Transferase</keyword>
<organism>
    <name type="scientific">Cereibacter sphaeroides (strain ATCC 17029 / ATH 2.4.9)</name>
    <name type="common">Rhodobacter sphaeroides</name>
    <dbReference type="NCBI Taxonomy" id="349101"/>
    <lineage>
        <taxon>Bacteria</taxon>
        <taxon>Pseudomonadati</taxon>
        <taxon>Pseudomonadota</taxon>
        <taxon>Alphaproteobacteria</taxon>
        <taxon>Rhodobacterales</taxon>
        <taxon>Paracoccaceae</taxon>
        <taxon>Cereibacter</taxon>
    </lineage>
</organism>
<protein>
    <recommendedName>
        <fullName evidence="1">Type III pantothenate kinase</fullName>
        <ecNumber evidence="1">2.7.1.33</ecNumber>
    </recommendedName>
    <alternativeName>
        <fullName evidence="1">PanK-III</fullName>
    </alternativeName>
    <alternativeName>
        <fullName evidence="1">Pantothenic acid kinase</fullName>
    </alternativeName>
</protein>
<feature type="chain" id="PRO_1000054406" description="Type III pantothenate kinase">
    <location>
        <begin position="1"/>
        <end position="257"/>
    </location>
</feature>
<feature type="active site" description="Proton acceptor" evidence="1">
    <location>
        <position position="109"/>
    </location>
</feature>
<feature type="binding site" evidence="1">
    <location>
        <begin position="6"/>
        <end position="13"/>
    </location>
    <ligand>
        <name>ATP</name>
        <dbReference type="ChEBI" id="CHEBI:30616"/>
    </ligand>
</feature>
<feature type="binding site" evidence="1">
    <location>
        <begin position="107"/>
        <end position="110"/>
    </location>
    <ligand>
        <name>substrate</name>
    </ligand>
</feature>
<feature type="binding site" evidence="1">
    <location>
        <position position="129"/>
    </location>
    <ligand>
        <name>K(+)</name>
        <dbReference type="ChEBI" id="CHEBI:29103"/>
    </ligand>
</feature>
<feature type="binding site" evidence="1">
    <location>
        <position position="132"/>
    </location>
    <ligand>
        <name>ATP</name>
        <dbReference type="ChEBI" id="CHEBI:30616"/>
    </ligand>
</feature>
<feature type="binding site" evidence="1">
    <location>
        <position position="184"/>
    </location>
    <ligand>
        <name>substrate</name>
    </ligand>
</feature>
<proteinExistence type="inferred from homology"/>
<accession>A3PIY7</accession>